<keyword id="KW-0963">Cytoplasm</keyword>
<keyword id="KW-0275">Fatty acid biosynthesis</keyword>
<keyword id="KW-0276">Fatty acid metabolism</keyword>
<keyword id="KW-0444">Lipid biosynthesis</keyword>
<keyword id="KW-0443">Lipid metabolism</keyword>
<keyword id="KW-0460">Magnesium</keyword>
<keyword id="KW-0479">Metal-binding</keyword>
<keyword id="KW-0808">Transferase</keyword>
<organism>
    <name type="scientific">Staphylococcus aureus (strain MRSA252)</name>
    <dbReference type="NCBI Taxonomy" id="282458"/>
    <lineage>
        <taxon>Bacteria</taxon>
        <taxon>Bacillati</taxon>
        <taxon>Bacillota</taxon>
        <taxon>Bacilli</taxon>
        <taxon>Bacillales</taxon>
        <taxon>Staphylococcaceae</taxon>
        <taxon>Staphylococcus</taxon>
    </lineage>
</organism>
<gene>
    <name evidence="1" type="primary">acpS</name>
    <name type="synonym">dpj</name>
    <name type="ordered locus">SAR2159</name>
</gene>
<feature type="chain" id="PRO_0000175703" description="Holo-[acyl-carrier-protein] synthase">
    <location>
        <begin position="1"/>
        <end position="119"/>
    </location>
</feature>
<feature type="binding site" evidence="1">
    <location>
        <position position="8"/>
    </location>
    <ligand>
        <name>Mg(2+)</name>
        <dbReference type="ChEBI" id="CHEBI:18420"/>
    </ligand>
</feature>
<feature type="binding site" evidence="1">
    <location>
        <position position="59"/>
    </location>
    <ligand>
        <name>Mg(2+)</name>
        <dbReference type="ChEBI" id="CHEBI:18420"/>
    </ligand>
</feature>
<name>ACPS_STAAR</name>
<dbReference type="EC" id="2.7.8.7" evidence="1"/>
<dbReference type="EMBL" id="BX571856">
    <property type="protein sequence ID" value="CAG41140.1"/>
    <property type="molecule type" value="Genomic_DNA"/>
</dbReference>
<dbReference type="RefSeq" id="WP_000581197.1">
    <property type="nucleotide sequence ID" value="NC_002952.2"/>
</dbReference>
<dbReference type="SMR" id="Q6GF02"/>
<dbReference type="KEGG" id="sar:SAR2159"/>
<dbReference type="HOGENOM" id="CLU_089696_1_2_9"/>
<dbReference type="Proteomes" id="UP000000596">
    <property type="component" value="Chromosome"/>
</dbReference>
<dbReference type="GO" id="GO:0005737">
    <property type="term" value="C:cytoplasm"/>
    <property type="evidence" value="ECO:0007669"/>
    <property type="project" value="UniProtKB-SubCell"/>
</dbReference>
<dbReference type="GO" id="GO:0008897">
    <property type="term" value="F:holo-[acyl-carrier-protein] synthase activity"/>
    <property type="evidence" value="ECO:0007669"/>
    <property type="project" value="UniProtKB-UniRule"/>
</dbReference>
<dbReference type="GO" id="GO:0000287">
    <property type="term" value="F:magnesium ion binding"/>
    <property type="evidence" value="ECO:0007669"/>
    <property type="project" value="UniProtKB-UniRule"/>
</dbReference>
<dbReference type="GO" id="GO:0006633">
    <property type="term" value="P:fatty acid biosynthetic process"/>
    <property type="evidence" value="ECO:0007669"/>
    <property type="project" value="UniProtKB-UniRule"/>
</dbReference>
<dbReference type="Gene3D" id="3.90.470.20">
    <property type="entry name" value="4'-phosphopantetheinyl transferase domain"/>
    <property type="match status" value="1"/>
</dbReference>
<dbReference type="HAMAP" id="MF_00101">
    <property type="entry name" value="AcpS"/>
    <property type="match status" value="1"/>
</dbReference>
<dbReference type="InterPro" id="IPR008278">
    <property type="entry name" value="4-PPantetheinyl_Trfase_dom"/>
</dbReference>
<dbReference type="InterPro" id="IPR037143">
    <property type="entry name" value="4-PPantetheinyl_Trfase_dom_sf"/>
</dbReference>
<dbReference type="InterPro" id="IPR002582">
    <property type="entry name" value="ACPS"/>
</dbReference>
<dbReference type="InterPro" id="IPR004568">
    <property type="entry name" value="Ppantetheine-prot_Trfase_dom"/>
</dbReference>
<dbReference type="NCBIfam" id="TIGR00516">
    <property type="entry name" value="acpS"/>
    <property type="match status" value="1"/>
</dbReference>
<dbReference type="NCBIfam" id="TIGR00556">
    <property type="entry name" value="pantethn_trn"/>
    <property type="match status" value="1"/>
</dbReference>
<dbReference type="Pfam" id="PF01648">
    <property type="entry name" value="ACPS"/>
    <property type="match status" value="1"/>
</dbReference>
<dbReference type="SUPFAM" id="SSF56214">
    <property type="entry name" value="4'-phosphopantetheinyl transferase"/>
    <property type="match status" value="1"/>
</dbReference>
<proteinExistence type="inferred from homology"/>
<comment type="function">
    <text evidence="1">Transfers the 4'-phosphopantetheine moiety from coenzyme A to a Ser of acyl-carrier-protein.</text>
</comment>
<comment type="catalytic activity">
    <reaction evidence="1">
        <text>apo-[ACP] + CoA = holo-[ACP] + adenosine 3',5'-bisphosphate + H(+)</text>
        <dbReference type="Rhea" id="RHEA:12068"/>
        <dbReference type="Rhea" id="RHEA-COMP:9685"/>
        <dbReference type="Rhea" id="RHEA-COMP:9690"/>
        <dbReference type="ChEBI" id="CHEBI:15378"/>
        <dbReference type="ChEBI" id="CHEBI:29999"/>
        <dbReference type="ChEBI" id="CHEBI:57287"/>
        <dbReference type="ChEBI" id="CHEBI:58343"/>
        <dbReference type="ChEBI" id="CHEBI:64479"/>
        <dbReference type="EC" id="2.7.8.7"/>
    </reaction>
</comment>
<comment type="cofactor">
    <cofactor evidence="1">
        <name>Mg(2+)</name>
        <dbReference type="ChEBI" id="CHEBI:18420"/>
    </cofactor>
</comment>
<comment type="subcellular location">
    <subcellularLocation>
        <location evidence="1">Cytoplasm</location>
    </subcellularLocation>
</comment>
<comment type="similarity">
    <text evidence="1">Belongs to the P-Pant transferase superfamily. AcpS family.</text>
</comment>
<reference key="1">
    <citation type="journal article" date="2004" name="Proc. Natl. Acad. Sci. U.S.A.">
        <title>Complete genomes of two clinical Staphylococcus aureus strains: evidence for the rapid evolution of virulence and drug resistance.</title>
        <authorList>
            <person name="Holden M.T.G."/>
            <person name="Feil E.J."/>
            <person name="Lindsay J.A."/>
            <person name="Peacock S.J."/>
            <person name="Day N.P.J."/>
            <person name="Enright M.C."/>
            <person name="Foster T.J."/>
            <person name="Moore C.E."/>
            <person name="Hurst L."/>
            <person name="Atkin R."/>
            <person name="Barron A."/>
            <person name="Bason N."/>
            <person name="Bentley S.D."/>
            <person name="Chillingworth C."/>
            <person name="Chillingworth T."/>
            <person name="Churcher C."/>
            <person name="Clark L."/>
            <person name="Corton C."/>
            <person name="Cronin A."/>
            <person name="Doggett J."/>
            <person name="Dowd L."/>
            <person name="Feltwell T."/>
            <person name="Hance Z."/>
            <person name="Harris B."/>
            <person name="Hauser H."/>
            <person name="Holroyd S."/>
            <person name="Jagels K."/>
            <person name="James K.D."/>
            <person name="Lennard N."/>
            <person name="Line A."/>
            <person name="Mayes R."/>
            <person name="Moule S."/>
            <person name="Mungall K."/>
            <person name="Ormond D."/>
            <person name="Quail M.A."/>
            <person name="Rabbinowitsch E."/>
            <person name="Rutherford K.M."/>
            <person name="Sanders M."/>
            <person name="Sharp S."/>
            <person name="Simmonds M."/>
            <person name="Stevens K."/>
            <person name="Whitehead S."/>
            <person name="Barrell B.G."/>
            <person name="Spratt B.G."/>
            <person name="Parkhill J."/>
        </authorList>
    </citation>
    <scope>NUCLEOTIDE SEQUENCE [LARGE SCALE GENOMIC DNA]</scope>
    <source>
        <strain>MRSA252</strain>
    </source>
</reference>
<protein>
    <recommendedName>
        <fullName evidence="1">Holo-[acyl-carrier-protein] synthase</fullName>
        <shortName evidence="1">Holo-ACP synthase</shortName>
        <ecNumber evidence="1">2.7.8.7</ecNumber>
    </recommendedName>
    <alternativeName>
        <fullName evidence="1">4'-phosphopantetheinyl transferase AcpS</fullName>
    </alternativeName>
</protein>
<sequence>MIHGIGVDLIEIDRIKVLYSKQPKLVERILTKNEQHKFNNFTHEQRKIEFLAGRFATKEAFSKALGTGLGKHVAFNDIDCYNDELGKPKIDYEGFIVHVSISHTEHYAMSQVVLEKSAF</sequence>
<accession>Q6GF02</accession>
<evidence type="ECO:0000255" key="1">
    <source>
        <dbReference type="HAMAP-Rule" id="MF_00101"/>
    </source>
</evidence>